<comment type="function">
    <text evidence="1">Catalyzes the ATP-dependent amination of UTP to CTP with either L-glutamine or ammonia as the source of nitrogen. Regulates intracellular CTP levels through interactions with the four ribonucleotide triphosphates.</text>
</comment>
<comment type="catalytic activity">
    <reaction evidence="1">
        <text>UTP + L-glutamine + ATP + H2O = CTP + L-glutamate + ADP + phosphate + 2 H(+)</text>
        <dbReference type="Rhea" id="RHEA:26426"/>
        <dbReference type="ChEBI" id="CHEBI:15377"/>
        <dbReference type="ChEBI" id="CHEBI:15378"/>
        <dbReference type="ChEBI" id="CHEBI:29985"/>
        <dbReference type="ChEBI" id="CHEBI:30616"/>
        <dbReference type="ChEBI" id="CHEBI:37563"/>
        <dbReference type="ChEBI" id="CHEBI:43474"/>
        <dbReference type="ChEBI" id="CHEBI:46398"/>
        <dbReference type="ChEBI" id="CHEBI:58359"/>
        <dbReference type="ChEBI" id="CHEBI:456216"/>
        <dbReference type="EC" id="6.3.4.2"/>
    </reaction>
</comment>
<comment type="catalytic activity">
    <reaction evidence="1">
        <text>L-glutamine + H2O = L-glutamate + NH4(+)</text>
        <dbReference type="Rhea" id="RHEA:15889"/>
        <dbReference type="ChEBI" id="CHEBI:15377"/>
        <dbReference type="ChEBI" id="CHEBI:28938"/>
        <dbReference type="ChEBI" id="CHEBI:29985"/>
        <dbReference type="ChEBI" id="CHEBI:58359"/>
    </reaction>
</comment>
<comment type="catalytic activity">
    <reaction evidence="1">
        <text>UTP + NH4(+) + ATP = CTP + ADP + phosphate + 2 H(+)</text>
        <dbReference type="Rhea" id="RHEA:16597"/>
        <dbReference type="ChEBI" id="CHEBI:15378"/>
        <dbReference type="ChEBI" id="CHEBI:28938"/>
        <dbReference type="ChEBI" id="CHEBI:30616"/>
        <dbReference type="ChEBI" id="CHEBI:37563"/>
        <dbReference type="ChEBI" id="CHEBI:43474"/>
        <dbReference type="ChEBI" id="CHEBI:46398"/>
        <dbReference type="ChEBI" id="CHEBI:456216"/>
    </reaction>
</comment>
<comment type="activity regulation">
    <text evidence="1">Allosterically activated by GTP, when glutamine is the substrate; GTP has no effect on the reaction when ammonia is the substrate. The allosteric effector GTP functions by stabilizing the protein conformation that binds the tetrahedral intermediate(s) formed during glutamine hydrolysis. Inhibited by the product CTP, via allosteric rather than competitive inhibition.</text>
</comment>
<comment type="pathway">
    <text evidence="1">Pyrimidine metabolism; CTP biosynthesis via de novo pathway; CTP from UDP: step 2/2.</text>
</comment>
<comment type="subunit">
    <text evidence="1">Homotetramer.</text>
</comment>
<comment type="miscellaneous">
    <text evidence="1">CTPSs have evolved a hybrid strategy for distinguishing between UTP and CTP. The overlapping regions of the product feedback inhibitory and substrate sites recognize a common feature in both compounds, the triphosphate moiety. To differentiate isosteric substrate and product pyrimidine rings, an additional pocket far from the expected kinase/ligase catalytic site, specifically recognizes the cytosine and ribose portions of the product inhibitor.</text>
</comment>
<comment type="similarity">
    <text evidence="1">Belongs to the CTP synthase family.</text>
</comment>
<reference key="1">
    <citation type="journal article" date="2001" name="Science">
        <title>Comparative genomics of Listeria species.</title>
        <authorList>
            <person name="Glaser P."/>
            <person name="Frangeul L."/>
            <person name="Buchrieser C."/>
            <person name="Rusniok C."/>
            <person name="Amend A."/>
            <person name="Baquero F."/>
            <person name="Berche P."/>
            <person name="Bloecker H."/>
            <person name="Brandt P."/>
            <person name="Chakraborty T."/>
            <person name="Charbit A."/>
            <person name="Chetouani F."/>
            <person name="Couve E."/>
            <person name="de Daruvar A."/>
            <person name="Dehoux P."/>
            <person name="Domann E."/>
            <person name="Dominguez-Bernal G."/>
            <person name="Duchaud E."/>
            <person name="Durant L."/>
            <person name="Dussurget O."/>
            <person name="Entian K.-D."/>
            <person name="Fsihi H."/>
            <person name="Garcia-del Portillo F."/>
            <person name="Garrido P."/>
            <person name="Gautier L."/>
            <person name="Goebel W."/>
            <person name="Gomez-Lopez N."/>
            <person name="Hain T."/>
            <person name="Hauf J."/>
            <person name="Jackson D."/>
            <person name="Jones L.-M."/>
            <person name="Kaerst U."/>
            <person name="Kreft J."/>
            <person name="Kuhn M."/>
            <person name="Kunst F."/>
            <person name="Kurapkat G."/>
            <person name="Madueno E."/>
            <person name="Maitournam A."/>
            <person name="Mata Vicente J."/>
            <person name="Ng E."/>
            <person name="Nedjari H."/>
            <person name="Nordsiek G."/>
            <person name="Novella S."/>
            <person name="de Pablos B."/>
            <person name="Perez-Diaz J.-C."/>
            <person name="Purcell R."/>
            <person name="Remmel B."/>
            <person name="Rose M."/>
            <person name="Schlueter T."/>
            <person name="Simoes N."/>
            <person name="Tierrez A."/>
            <person name="Vazquez-Boland J.-A."/>
            <person name="Voss H."/>
            <person name="Wehland J."/>
            <person name="Cossart P."/>
        </authorList>
    </citation>
    <scope>NUCLEOTIDE SEQUENCE [LARGE SCALE GENOMIC DNA]</scope>
    <source>
        <strain>ATCC BAA-679 / EGD-e</strain>
    </source>
</reference>
<evidence type="ECO:0000255" key="1">
    <source>
        <dbReference type="HAMAP-Rule" id="MF_01227"/>
    </source>
</evidence>
<name>PYRG_LISMO</name>
<proteinExistence type="inferred from homology"/>
<gene>
    <name evidence="1" type="primary">pyrG</name>
    <name type="ordered locus">lmo2559</name>
</gene>
<dbReference type="EC" id="6.3.4.2" evidence="1"/>
<dbReference type="EMBL" id="AL591983">
    <property type="protein sequence ID" value="CAD00637.1"/>
    <property type="molecule type" value="Genomic_DNA"/>
</dbReference>
<dbReference type="PIR" id="AG1394">
    <property type="entry name" value="AG1394"/>
</dbReference>
<dbReference type="RefSeq" id="NP_466082.1">
    <property type="nucleotide sequence ID" value="NC_003210.1"/>
</dbReference>
<dbReference type="RefSeq" id="WP_003723607.1">
    <property type="nucleotide sequence ID" value="NZ_CP149495.1"/>
</dbReference>
<dbReference type="SMR" id="Q8Y495"/>
<dbReference type="STRING" id="169963.gene:17595270"/>
<dbReference type="PaxDb" id="169963-lmo2559"/>
<dbReference type="EnsemblBacteria" id="CAD00637">
    <property type="protein sequence ID" value="CAD00637"/>
    <property type="gene ID" value="CAD00637"/>
</dbReference>
<dbReference type="GeneID" id="987251"/>
<dbReference type="KEGG" id="lmo:lmo2559"/>
<dbReference type="PATRIC" id="fig|169963.11.peg.2621"/>
<dbReference type="eggNOG" id="COG0504">
    <property type="taxonomic scope" value="Bacteria"/>
</dbReference>
<dbReference type="HOGENOM" id="CLU_011675_5_0_9"/>
<dbReference type="OrthoDB" id="9801107at2"/>
<dbReference type="PhylomeDB" id="Q8Y495"/>
<dbReference type="BioCyc" id="LMON169963:LMO2559-MONOMER"/>
<dbReference type="UniPathway" id="UPA00159">
    <property type="reaction ID" value="UER00277"/>
</dbReference>
<dbReference type="Proteomes" id="UP000000817">
    <property type="component" value="Chromosome"/>
</dbReference>
<dbReference type="GO" id="GO:0005829">
    <property type="term" value="C:cytosol"/>
    <property type="evidence" value="ECO:0000318"/>
    <property type="project" value="GO_Central"/>
</dbReference>
<dbReference type="GO" id="GO:0005524">
    <property type="term" value="F:ATP binding"/>
    <property type="evidence" value="ECO:0007669"/>
    <property type="project" value="UniProtKB-KW"/>
</dbReference>
<dbReference type="GO" id="GO:0003883">
    <property type="term" value="F:CTP synthase activity"/>
    <property type="evidence" value="ECO:0000318"/>
    <property type="project" value="GO_Central"/>
</dbReference>
<dbReference type="GO" id="GO:0004359">
    <property type="term" value="F:glutaminase activity"/>
    <property type="evidence" value="ECO:0007669"/>
    <property type="project" value="RHEA"/>
</dbReference>
<dbReference type="GO" id="GO:0042802">
    <property type="term" value="F:identical protein binding"/>
    <property type="evidence" value="ECO:0000318"/>
    <property type="project" value="GO_Central"/>
</dbReference>
<dbReference type="GO" id="GO:0046872">
    <property type="term" value="F:metal ion binding"/>
    <property type="evidence" value="ECO:0007669"/>
    <property type="project" value="UniProtKB-KW"/>
</dbReference>
<dbReference type="GO" id="GO:0044210">
    <property type="term" value="P:'de novo' CTP biosynthetic process"/>
    <property type="evidence" value="ECO:0007669"/>
    <property type="project" value="UniProtKB-UniRule"/>
</dbReference>
<dbReference type="GO" id="GO:0006241">
    <property type="term" value="P:CTP biosynthetic process"/>
    <property type="evidence" value="ECO:0000318"/>
    <property type="project" value="GO_Central"/>
</dbReference>
<dbReference type="GO" id="GO:0019856">
    <property type="term" value="P:pyrimidine nucleobase biosynthetic process"/>
    <property type="evidence" value="ECO:0000318"/>
    <property type="project" value="GO_Central"/>
</dbReference>
<dbReference type="CDD" id="cd03113">
    <property type="entry name" value="CTPS_N"/>
    <property type="match status" value="1"/>
</dbReference>
<dbReference type="CDD" id="cd01746">
    <property type="entry name" value="GATase1_CTP_Synthase"/>
    <property type="match status" value="1"/>
</dbReference>
<dbReference type="FunFam" id="3.40.50.300:FF:000009">
    <property type="entry name" value="CTP synthase"/>
    <property type="match status" value="1"/>
</dbReference>
<dbReference type="FunFam" id="3.40.50.880:FF:000002">
    <property type="entry name" value="CTP synthase"/>
    <property type="match status" value="1"/>
</dbReference>
<dbReference type="Gene3D" id="3.40.50.880">
    <property type="match status" value="1"/>
</dbReference>
<dbReference type="Gene3D" id="3.40.50.300">
    <property type="entry name" value="P-loop containing nucleotide triphosphate hydrolases"/>
    <property type="match status" value="1"/>
</dbReference>
<dbReference type="HAMAP" id="MF_01227">
    <property type="entry name" value="PyrG"/>
    <property type="match status" value="1"/>
</dbReference>
<dbReference type="InterPro" id="IPR029062">
    <property type="entry name" value="Class_I_gatase-like"/>
</dbReference>
<dbReference type="InterPro" id="IPR004468">
    <property type="entry name" value="CTP_synthase"/>
</dbReference>
<dbReference type="InterPro" id="IPR017456">
    <property type="entry name" value="CTP_synthase_N"/>
</dbReference>
<dbReference type="InterPro" id="IPR017926">
    <property type="entry name" value="GATASE"/>
</dbReference>
<dbReference type="InterPro" id="IPR033828">
    <property type="entry name" value="GATase1_CTP_Synthase"/>
</dbReference>
<dbReference type="InterPro" id="IPR027417">
    <property type="entry name" value="P-loop_NTPase"/>
</dbReference>
<dbReference type="NCBIfam" id="NF003792">
    <property type="entry name" value="PRK05380.1"/>
    <property type="match status" value="1"/>
</dbReference>
<dbReference type="NCBIfam" id="TIGR00337">
    <property type="entry name" value="PyrG"/>
    <property type="match status" value="1"/>
</dbReference>
<dbReference type="PANTHER" id="PTHR11550">
    <property type="entry name" value="CTP SYNTHASE"/>
    <property type="match status" value="1"/>
</dbReference>
<dbReference type="PANTHER" id="PTHR11550:SF0">
    <property type="entry name" value="CTP SYNTHASE-RELATED"/>
    <property type="match status" value="1"/>
</dbReference>
<dbReference type="Pfam" id="PF06418">
    <property type="entry name" value="CTP_synth_N"/>
    <property type="match status" value="1"/>
</dbReference>
<dbReference type="Pfam" id="PF00117">
    <property type="entry name" value="GATase"/>
    <property type="match status" value="1"/>
</dbReference>
<dbReference type="SUPFAM" id="SSF52317">
    <property type="entry name" value="Class I glutamine amidotransferase-like"/>
    <property type="match status" value="1"/>
</dbReference>
<dbReference type="SUPFAM" id="SSF52540">
    <property type="entry name" value="P-loop containing nucleoside triphosphate hydrolases"/>
    <property type="match status" value="1"/>
</dbReference>
<dbReference type="PROSITE" id="PS51273">
    <property type="entry name" value="GATASE_TYPE_1"/>
    <property type="match status" value="1"/>
</dbReference>
<feature type="chain" id="PRO_0000138198" description="CTP synthase">
    <location>
        <begin position="1"/>
        <end position="532"/>
    </location>
</feature>
<feature type="domain" description="Glutamine amidotransferase type-1" evidence="1">
    <location>
        <begin position="292"/>
        <end position="532"/>
    </location>
</feature>
<feature type="region of interest" description="Amidoligase domain" evidence="1">
    <location>
        <begin position="1"/>
        <end position="267"/>
    </location>
</feature>
<feature type="active site" description="Nucleophile; for glutamine hydrolysis" evidence="1">
    <location>
        <position position="381"/>
    </location>
</feature>
<feature type="active site" evidence="1">
    <location>
        <position position="507"/>
    </location>
</feature>
<feature type="active site" evidence="1">
    <location>
        <position position="509"/>
    </location>
</feature>
<feature type="binding site" evidence="1">
    <location>
        <position position="13"/>
    </location>
    <ligand>
        <name>CTP</name>
        <dbReference type="ChEBI" id="CHEBI:37563"/>
        <note>allosteric inhibitor</note>
    </ligand>
</feature>
<feature type="binding site" evidence="1">
    <location>
        <position position="13"/>
    </location>
    <ligand>
        <name>UTP</name>
        <dbReference type="ChEBI" id="CHEBI:46398"/>
    </ligand>
</feature>
<feature type="binding site" evidence="1">
    <location>
        <begin position="14"/>
        <end position="19"/>
    </location>
    <ligand>
        <name>ATP</name>
        <dbReference type="ChEBI" id="CHEBI:30616"/>
    </ligand>
</feature>
<feature type="binding site" evidence="1">
    <location>
        <position position="54"/>
    </location>
    <ligand>
        <name>L-glutamine</name>
        <dbReference type="ChEBI" id="CHEBI:58359"/>
    </ligand>
</feature>
<feature type="binding site" evidence="1">
    <location>
        <position position="71"/>
    </location>
    <ligand>
        <name>ATP</name>
        <dbReference type="ChEBI" id="CHEBI:30616"/>
    </ligand>
</feature>
<feature type="binding site" evidence="1">
    <location>
        <position position="71"/>
    </location>
    <ligand>
        <name>Mg(2+)</name>
        <dbReference type="ChEBI" id="CHEBI:18420"/>
    </ligand>
</feature>
<feature type="binding site" evidence="1">
    <location>
        <position position="141"/>
    </location>
    <ligand>
        <name>Mg(2+)</name>
        <dbReference type="ChEBI" id="CHEBI:18420"/>
    </ligand>
</feature>
<feature type="binding site" evidence="1">
    <location>
        <begin position="148"/>
        <end position="150"/>
    </location>
    <ligand>
        <name>CTP</name>
        <dbReference type="ChEBI" id="CHEBI:37563"/>
        <note>allosteric inhibitor</note>
    </ligand>
</feature>
<feature type="binding site" evidence="1">
    <location>
        <begin position="188"/>
        <end position="193"/>
    </location>
    <ligand>
        <name>CTP</name>
        <dbReference type="ChEBI" id="CHEBI:37563"/>
        <note>allosteric inhibitor</note>
    </ligand>
</feature>
<feature type="binding site" evidence="1">
    <location>
        <begin position="188"/>
        <end position="193"/>
    </location>
    <ligand>
        <name>UTP</name>
        <dbReference type="ChEBI" id="CHEBI:46398"/>
    </ligand>
</feature>
<feature type="binding site" evidence="1">
    <location>
        <position position="224"/>
    </location>
    <ligand>
        <name>CTP</name>
        <dbReference type="ChEBI" id="CHEBI:37563"/>
        <note>allosteric inhibitor</note>
    </ligand>
</feature>
<feature type="binding site" evidence="1">
    <location>
        <position position="224"/>
    </location>
    <ligand>
        <name>UTP</name>
        <dbReference type="ChEBI" id="CHEBI:46398"/>
    </ligand>
</feature>
<feature type="binding site" evidence="1">
    <location>
        <position position="354"/>
    </location>
    <ligand>
        <name>L-glutamine</name>
        <dbReference type="ChEBI" id="CHEBI:58359"/>
    </ligand>
</feature>
<feature type="binding site" evidence="1">
    <location>
        <begin position="382"/>
        <end position="385"/>
    </location>
    <ligand>
        <name>L-glutamine</name>
        <dbReference type="ChEBI" id="CHEBI:58359"/>
    </ligand>
</feature>
<feature type="binding site" evidence="1">
    <location>
        <position position="405"/>
    </location>
    <ligand>
        <name>L-glutamine</name>
        <dbReference type="ChEBI" id="CHEBI:58359"/>
    </ligand>
</feature>
<feature type="binding site" evidence="1">
    <location>
        <position position="462"/>
    </location>
    <ligand>
        <name>L-glutamine</name>
        <dbReference type="ChEBI" id="CHEBI:58359"/>
    </ligand>
</feature>
<organism>
    <name type="scientific">Listeria monocytogenes serovar 1/2a (strain ATCC BAA-679 / EGD-e)</name>
    <dbReference type="NCBI Taxonomy" id="169963"/>
    <lineage>
        <taxon>Bacteria</taxon>
        <taxon>Bacillati</taxon>
        <taxon>Bacillota</taxon>
        <taxon>Bacilli</taxon>
        <taxon>Bacillales</taxon>
        <taxon>Listeriaceae</taxon>
        <taxon>Listeria</taxon>
    </lineage>
</organism>
<sequence length="532" mass="59567">MTKYIFVTGGVVSSIGKGITAASLGRLLKNRGLSVTIQKFDPYINVDPGTMSPYQHGEVYVTDDGAETDLDLGHYERFIDINLNKYSNVTTGKVYSEVIKKERRGDYLGGTVQVIPHITNELKDRVFRAARMTNSDIIITEIGGTVGDIESLPFLEAIRQIKGDVGAENVLYIHTTLIPYIKAAGEMKTKPTQHSVKELRSLGIQPNIIVVRTEQPVSQEMKDKIALFCDIKASEVIESRDEETLYNVPLSLQKQKMDDIVLEHLQLEAPQAEMTDWKNLVHRVKNLSKKVRIGLVGKYVSLQDAYLSVAEALRHAGYDHDAEIEIDWIDSEKVTKENVAEIMKDVDGILVPGGFGDRAIEGKIAAIEYARVNKVPYFGICLGMQLATVEFARNVLGLEGAHSAEIEPETNHNIIDLLPEQKNIENMGGTLRLGLYPARIKQGTKAEAAYGTTLVEERHRHRYEFNNEYREQMEEAGMIVSATSPDGRLVEVVELIDHPWFVACQYHPEFISRPNRPQSLFKDFVGAALKNK</sequence>
<protein>
    <recommendedName>
        <fullName evidence="1">CTP synthase</fullName>
        <ecNumber evidence="1">6.3.4.2</ecNumber>
    </recommendedName>
    <alternativeName>
        <fullName evidence="1">Cytidine 5'-triphosphate synthase</fullName>
    </alternativeName>
    <alternativeName>
        <fullName evidence="1">Cytidine triphosphate synthetase</fullName>
        <shortName evidence="1">CTP synthetase</shortName>
        <shortName evidence="1">CTPS</shortName>
    </alternativeName>
    <alternativeName>
        <fullName evidence="1">UTP--ammonia ligase</fullName>
    </alternativeName>
</protein>
<keyword id="KW-0067">ATP-binding</keyword>
<keyword id="KW-0315">Glutamine amidotransferase</keyword>
<keyword id="KW-0436">Ligase</keyword>
<keyword id="KW-0460">Magnesium</keyword>
<keyword id="KW-0479">Metal-binding</keyword>
<keyword id="KW-0547">Nucleotide-binding</keyword>
<keyword id="KW-0665">Pyrimidine biosynthesis</keyword>
<keyword id="KW-1185">Reference proteome</keyword>
<accession>Q8Y495</accession>